<name>PAGP_BORPA</name>
<evidence type="ECO:0000255" key="1">
    <source>
        <dbReference type="HAMAP-Rule" id="MF_00837"/>
    </source>
</evidence>
<evidence type="ECO:0000269" key="2">
    <source>
    </source>
</evidence>
<evidence type="ECO:0000305" key="3"/>
<reference key="1">
    <citation type="journal article" date="2003" name="Nat. Genet.">
        <title>Comparative analysis of the genome sequences of Bordetella pertussis, Bordetella parapertussis and Bordetella bronchiseptica.</title>
        <authorList>
            <person name="Parkhill J."/>
            <person name="Sebaihia M."/>
            <person name="Preston A."/>
            <person name="Murphy L.D."/>
            <person name="Thomson N.R."/>
            <person name="Harris D.E."/>
            <person name="Holden M.T.G."/>
            <person name="Churcher C.M."/>
            <person name="Bentley S.D."/>
            <person name="Mungall K.L."/>
            <person name="Cerdeno-Tarraga A.-M."/>
            <person name="Temple L."/>
            <person name="James K.D."/>
            <person name="Harris B."/>
            <person name="Quail M.A."/>
            <person name="Achtman M."/>
            <person name="Atkin R."/>
            <person name="Baker S."/>
            <person name="Basham D."/>
            <person name="Bason N."/>
            <person name="Cherevach I."/>
            <person name="Chillingworth T."/>
            <person name="Collins M."/>
            <person name="Cronin A."/>
            <person name="Davis P."/>
            <person name="Doggett J."/>
            <person name="Feltwell T."/>
            <person name="Goble A."/>
            <person name="Hamlin N."/>
            <person name="Hauser H."/>
            <person name="Holroyd S."/>
            <person name="Jagels K."/>
            <person name="Leather S."/>
            <person name="Moule S."/>
            <person name="Norberczak H."/>
            <person name="O'Neil S."/>
            <person name="Ormond D."/>
            <person name="Price C."/>
            <person name="Rabbinowitsch E."/>
            <person name="Rutter S."/>
            <person name="Sanders M."/>
            <person name="Saunders D."/>
            <person name="Seeger K."/>
            <person name="Sharp S."/>
            <person name="Simmonds M."/>
            <person name="Skelton J."/>
            <person name="Squares R."/>
            <person name="Squares S."/>
            <person name="Stevens K."/>
            <person name="Unwin L."/>
            <person name="Whitehead S."/>
            <person name="Barrell B.G."/>
            <person name="Maskell D.J."/>
        </authorList>
    </citation>
    <scope>NUCLEOTIDE SEQUENCE [LARGE SCALE GENOMIC DNA]</scope>
    <source>
        <strain>12822 / ATCC BAA-587 / NCTC 13253</strain>
    </source>
</reference>
<reference key="2">
    <citation type="journal article" date="2003" name="Mol. Microbiol.">
        <title>Bordetella bronchiseptica PagP is a Bvg-regulated lipid A palmitoyl transferase that is required for persistent colonization of the mouse respiratory tract.</title>
        <authorList>
            <person name="Preston A."/>
            <person name="Maxim E."/>
            <person name="Toland E."/>
            <person name="Pishko E.J."/>
            <person name="Harvill E.T."/>
            <person name="Caroff M."/>
            <person name="Maskell D.J."/>
        </authorList>
    </citation>
    <scope>INDUCTION</scope>
</reference>
<gene>
    <name evidence="1" type="primary">pagP</name>
    <name type="ordered locus">BPP3735</name>
</gene>
<comment type="function">
    <text evidence="1">Transfers a fatty acid residue from the sn-1 position of a phospholipid to the N-linked hydroxyfatty acid chain on the proximal unit of lipid A or its precursors.</text>
</comment>
<comment type="catalytic activity">
    <reaction evidence="1">
        <text>a lipid A + a 1,2-diacyl-sn-glycero-3-phosphocholine = a hepta-acyl lipid A + a 2-acyl-sn-glycero-3-phosphocholine</text>
        <dbReference type="Rhea" id="RHEA:74275"/>
        <dbReference type="ChEBI" id="CHEBI:57643"/>
        <dbReference type="ChEBI" id="CHEBI:57875"/>
        <dbReference type="ChEBI" id="CHEBI:193141"/>
        <dbReference type="ChEBI" id="CHEBI:193142"/>
        <dbReference type="EC" id="2.3.1.251"/>
    </reaction>
</comment>
<comment type="catalytic activity">
    <reaction evidence="1">
        <text>a lipid IVA + a 1,2-diacyl-sn-glycero-3-phosphocholine = a lipid IVB + a 2-acyl-sn-glycero-3-phosphocholine</text>
        <dbReference type="Rhea" id="RHEA:74279"/>
        <dbReference type="ChEBI" id="CHEBI:57643"/>
        <dbReference type="ChEBI" id="CHEBI:57875"/>
        <dbReference type="ChEBI" id="CHEBI:176425"/>
        <dbReference type="ChEBI" id="CHEBI:193143"/>
        <dbReference type="EC" id="2.3.1.251"/>
    </reaction>
</comment>
<comment type="catalytic activity">
    <reaction evidence="1">
        <text>a lipid IIA + a 1,2-diacyl-sn-glycero-3-phosphocholine = a lipid IIB + a 2-acyl-sn-glycero-3-phosphocholine</text>
        <dbReference type="Rhea" id="RHEA:74283"/>
        <dbReference type="ChEBI" id="CHEBI:57643"/>
        <dbReference type="ChEBI" id="CHEBI:57875"/>
        <dbReference type="ChEBI" id="CHEBI:193144"/>
        <dbReference type="ChEBI" id="CHEBI:193145"/>
        <dbReference type="EC" id="2.3.1.251"/>
    </reaction>
</comment>
<comment type="subunit">
    <text evidence="1">Homodimer.</text>
</comment>
<comment type="subcellular location">
    <subcellularLocation>
        <location evidence="1 3">Cell outer membrane</location>
        <topology evidence="1 3">Lipid-anchor</topology>
    </subcellularLocation>
</comment>
<comment type="induction">
    <text evidence="2">The expression of pagP is down-regulated in Bvg-minus phase and up-regulated in Bvg-plus phase.</text>
</comment>
<comment type="similarity">
    <text evidence="1 3">Belongs to the lipid A palmitoyltransferase family.</text>
</comment>
<proteinExistence type="evidence at transcript level"/>
<organism>
    <name type="scientific">Bordetella parapertussis (strain 12822 / ATCC BAA-587 / NCTC 13253)</name>
    <dbReference type="NCBI Taxonomy" id="257311"/>
    <lineage>
        <taxon>Bacteria</taxon>
        <taxon>Pseudomonadati</taxon>
        <taxon>Pseudomonadota</taxon>
        <taxon>Betaproteobacteria</taxon>
        <taxon>Burkholderiales</taxon>
        <taxon>Alcaligenaceae</taxon>
        <taxon>Bordetella</taxon>
    </lineage>
</organism>
<sequence length="182" mass="20334">MTQYFRALAFFLLLVPATAMACDDWPSWARGACQRVDQIWNEGGNDLYLTGYSWHNRAMYSSDKIRSFNELAWGGGLGKSIYDEDGDWQGLYAMAFLDSHSDIEPIAGYGFQKIGRIGADTRLGIGYTVFLTSRSDIMSRVPFPGILPLVSAGYRDATLYATYIPGGKGNGNVLFMFGRWEF</sequence>
<dbReference type="EC" id="2.3.1.251" evidence="1"/>
<dbReference type="EMBL" id="BX640434">
    <property type="protein sequence ID" value="CAE39018.1"/>
    <property type="molecule type" value="Genomic_DNA"/>
</dbReference>
<dbReference type="RefSeq" id="WP_010929221.1">
    <property type="nucleotide sequence ID" value="NC_002928.3"/>
</dbReference>
<dbReference type="SMR" id="Q7W4D1"/>
<dbReference type="GeneID" id="93205524"/>
<dbReference type="KEGG" id="bpa:BPP3735"/>
<dbReference type="HOGENOM" id="CLU_104099_0_0_4"/>
<dbReference type="BRENDA" id="2.3.1.251">
    <property type="organism ID" value="898"/>
</dbReference>
<dbReference type="Proteomes" id="UP000001421">
    <property type="component" value="Chromosome"/>
</dbReference>
<dbReference type="GO" id="GO:0009279">
    <property type="term" value="C:cell outer membrane"/>
    <property type="evidence" value="ECO:0007669"/>
    <property type="project" value="UniProtKB-SubCell"/>
</dbReference>
<dbReference type="GO" id="GO:0016416">
    <property type="term" value="F:O-palmitoyltransferase activity"/>
    <property type="evidence" value="ECO:0000250"/>
    <property type="project" value="UniProtKB"/>
</dbReference>
<dbReference type="GO" id="GO:0009245">
    <property type="term" value="P:lipid A biosynthetic process"/>
    <property type="evidence" value="ECO:0000250"/>
    <property type="project" value="UniProtKB"/>
</dbReference>
<dbReference type="FunFam" id="2.40.160.20:FF:000002">
    <property type="entry name" value="Lipid A palmitoyltransferase PagP"/>
    <property type="match status" value="1"/>
</dbReference>
<dbReference type="Gene3D" id="2.40.160.20">
    <property type="match status" value="1"/>
</dbReference>
<dbReference type="HAMAP" id="MF_00837">
    <property type="entry name" value="PagP_transferase"/>
    <property type="match status" value="1"/>
</dbReference>
<dbReference type="InterPro" id="IPR009746">
    <property type="entry name" value="LipidA_acyl_PagP"/>
</dbReference>
<dbReference type="InterPro" id="IPR011250">
    <property type="entry name" value="OMP/PagP_b-brl"/>
</dbReference>
<dbReference type="NCBIfam" id="NF008271">
    <property type="entry name" value="PRK11045.1"/>
    <property type="match status" value="1"/>
</dbReference>
<dbReference type="Pfam" id="PF07017">
    <property type="entry name" value="PagP"/>
    <property type="match status" value="1"/>
</dbReference>
<dbReference type="SUPFAM" id="SSF56925">
    <property type="entry name" value="OMPA-like"/>
    <property type="match status" value="1"/>
</dbReference>
<dbReference type="PROSITE" id="PS51257">
    <property type="entry name" value="PROKAR_LIPOPROTEIN"/>
    <property type="match status" value="1"/>
</dbReference>
<protein>
    <recommendedName>
        <fullName evidence="1">Lipid A acyltransferase PagP</fullName>
        <ecNumber evidence="1">2.3.1.251</ecNumber>
    </recommendedName>
    <alternativeName>
        <fullName evidence="1">Lipid A acylation protein</fullName>
    </alternativeName>
</protein>
<accession>Q7W4D1</accession>
<feature type="signal peptide" evidence="1">
    <location>
        <begin position="1"/>
        <end position="21"/>
    </location>
</feature>
<feature type="chain" id="PRO_0000414428" description="Lipid A acyltransferase PagP">
    <location>
        <begin position="22"/>
        <end position="182"/>
    </location>
</feature>
<feature type="active site" evidence="1">
    <location>
        <position position="55"/>
    </location>
</feature>
<feature type="active site" evidence="1">
    <location>
        <position position="98"/>
    </location>
</feature>
<feature type="active site" evidence="1">
    <location>
        <position position="99"/>
    </location>
</feature>
<feature type="site" description="Role in lipopolysaccharide recognition" evidence="1">
    <location>
        <position position="64"/>
    </location>
</feature>
<feature type="lipid moiety-binding region" description="N-palmitoyl cysteine" evidence="1">
    <location>
        <position position="22"/>
    </location>
</feature>
<feature type="lipid moiety-binding region" description="S-diacylglycerol cysteine" evidence="1">
    <location>
        <position position="22"/>
    </location>
</feature>
<keyword id="KW-0012">Acyltransferase</keyword>
<keyword id="KW-0998">Cell outer membrane</keyword>
<keyword id="KW-0449">Lipoprotein</keyword>
<keyword id="KW-0472">Membrane</keyword>
<keyword id="KW-0564">Palmitate</keyword>
<keyword id="KW-0732">Signal</keyword>
<keyword id="KW-0808">Transferase</keyword>